<comment type="catalytic activity">
    <reaction evidence="1">
        <text>2 reduced [2Fe-2S]-[ferredoxin] + NADP(+) + H(+) = 2 oxidized [2Fe-2S]-[ferredoxin] + NADPH</text>
        <dbReference type="Rhea" id="RHEA:20125"/>
        <dbReference type="Rhea" id="RHEA-COMP:10000"/>
        <dbReference type="Rhea" id="RHEA-COMP:10001"/>
        <dbReference type="ChEBI" id="CHEBI:15378"/>
        <dbReference type="ChEBI" id="CHEBI:33737"/>
        <dbReference type="ChEBI" id="CHEBI:33738"/>
        <dbReference type="ChEBI" id="CHEBI:57783"/>
        <dbReference type="ChEBI" id="CHEBI:58349"/>
        <dbReference type="EC" id="1.18.1.2"/>
    </reaction>
</comment>
<comment type="cofactor">
    <cofactor evidence="1">
        <name>FAD</name>
        <dbReference type="ChEBI" id="CHEBI:57692"/>
    </cofactor>
    <text evidence="1">Binds 1 FAD per subunit.</text>
</comment>
<comment type="subunit">
    <text evidence="1">Homodimer.</text>
</comment>
<comment type="similarity">
    <text evidence="1">Belongs to the ferredoxin--NADP reductase type 2 family.</text>
</comment>
<feature type="chain" id="PRO_0000364942" description="Ferredoxin--NADP reductase">
    <location>
        <begin position="1"/>
        <end position="344"/>
    </location>
</feature>
<feature type="binding site" evidence="1">
    <location>
        <position position="12"/>
    </location>
    <ligand>
        <name>FAD</name>
        <dbReference type="ChEBI" id="CHEBI:57692"/>
    </ligand>
</feature>
<feature type="binding site" evidence="1">
    <location>
        <position position="31"/>
    </location>
    <ligand>
        <name>FAD</name>
        <dbReference type="ChEBI" id="CHEBI:57692"/>
    </ligand>
</feature>
<feature type="binding site" evidence="1">
    <location>
        <position position="39"/>
    </location>
    <ligand>
        <name>FAD</name>
        <dbReference type="ChEBI" id="CHEBI:57692"/>
    </ligand>
</feature>
<feature type="binding site" evidence="1">
    <location>
        <position position="43"/>
    </location>
    <ligand>
        <name>FAD</name>
        <dbReference type="ChEBI" id="CHEBI:57692"/>
    </ligand>
</feature>
<feature type="binding site" evidence="1">
    <location>
        <position position="83"/>
    </location>
    <ligand>
        <name>FAD</name>
        <dbReference type="ChEBI" id="CHEBI:57692"/>
    </ligand>
</feature>
<feature type="binding site" evidence="1">
    <location>
        <position position="118"/>
    </location>
    <ligand>
        <name>FAD</name>
        <dbReference type="ChEBI" id="CHEBI:57692"/>
    </ligand>
</feature>
<feature type="binding site" evidence="1">
    <location>
        <position position="285"/>
    </location>
    <ligand>
        <name>FAD</name>
        <dbReference type="ChEBI" id="CHEBI:57692"/>
    </ligand>
</feature>
<feature type="binding site" evidence="1">
    <location>
        <position position="326"/>
    </location>
    <ligand>
        <name>FAD</name>
        <dbReference type="ChEBI" id="CHEBI:57692"/>
    </ligand>
</feature>
<sequence>MKDVTIIGGGPSGLYASFYAGLRDMSVRLIDVQSELGGKMRIYPEKIIWDIGGIAPKPCHEILKDTIKQGLYFKPEVHLNERVVDIRKKAERHFEVETEAGEIYTSKAVIIAIGAGIINPKQLDVKGVERYQLTNLHYVVQSYRRFKDKDVLISGGGNTALDWAHDIAKIAKSVTVVYRKEDVSGHEAMKTLVTDLNVKLCPKTRIKYLVGNDDETHISEVVLEHVESGDTHTVKFDDVIISHGFDRCNTLLSETSSKLDMHDDCRVKGFGNTTTSIPGIYACGDIVYHDAKSHLIASAFSDGANAANLAKTYIQPDANAEGYVSSHHEVFKEANKTIVNKHLY</sequence>
<proteinExistence type="inferred from homology"/>
<gene>
    <name type="ordered locus">MW2294</name>
</gene>
<protein>
    <recommendedName>
        <fullName evidence="1">Ferredoxin--NADP reductase</fullName>
        <shortName evidence="1">FNR</shortName>
        <shortName evidence="1">Fd-NADP(+) reductase</shortName>
        <ecNumber evidence="1">1.18.1.2</ecNumber>
    </recommendedName>
</protein>
<evidence type="ECO:0000255" key="1">
    <source>
        <dbReference type="HAMAP-Rule" id="MF_01685"/>
    </source>
</evidence>
<name>FENR_STAAW</name>
<keyword id="KW-0274">FAD</keyword>
<keyword id="KW-0285">Flavoprotein</keyword>
<keyword id="KW-0521">NADP</keyword>
<keyword id="KW-0560">Oxidoreductase</keyword>
<reference key="1">
    <citation type="journal article" date="2002" name="Lancet">
        <title>Genome and virulence determinants of high virulence community-acquired MRSA.</title>
        <authorList>
            <person name="Baba T."/>
            <person name="Takeuchi F."/>
            <person name="Kuroda M."/>
            <person name="Yuzawa H."/>
            <person name="Aoki K."/>
            <person name="Oguchi A."/>
            <person name="Nagai Y."/>
            <person name="Iwama N."/>
            <person name="Asano K."/>
            <person name="Naimi T."/>
            <person name="Kuroda H."/>
            <person name="Cui L."/>
            <person name="Yamamoto K."/>
            <person name="Hiramatsu K."/>
        </authorList>
    </citation>
    <scope>NUCLEOTIDE SEQUENCE [LARGE SCALE GENOMIC DNA]</scope>
    <source>
        <strain>MW2</strain>
    </source>
</reference>
<accession>Q8NV36</accession>
<organism>
    <name type="scientific">Staphylococcus aureus (strain MW2)</name>
    <dbReference type="NCBI Taxonomy" id="196620"/>
    <lineage>
        <taxon>Bacteria</taxon>
        <taxon>Bacillati</taxon>
        <taxon>Bacillota</taxon>
        <taxon>Bacilli</taxon>
        <taxon>Bacillales</taxon>
        <taxon>Staphylococcaceae</taxon>
        <taxon>Staphylococcus</taxon>
    </lineage>
</organism>
<dbReference type="EC" id="1.18.1.2" evidence="1"/>
<dbReference type="EMBL" id="BA000033">
    <property type="protein sequence ID" value="BAB96159.1"/>
    <property type="molecule type" value="Genomic_DNA"/>
</dbReference>
<dbReference type="RefSeq" id="WP_000655972.1">
    <property type="nucleotide sequence ID" value="NC_003923.1"/>
</dbReference>
<dbReference type="SMR" id="Q8NV36"/>
<dbReference type="KEGG" id="sam:MW2294"/>
<dbReference type="HOGENOM" id="CLU_031864_5_5_9"/>
<dbReference type="GO" id="GO:0004324">
    <property type="term" value="F:ferredoxin-NADP+ reductase activity"/>
    <property type="evidence" value="ECO:0007669"/>
    <property type="project" value="UniProtKB-UniRule"/>
</dbReference>
<dbReference type="GO" id="GO:0050660">
    <property type="term" value="F:flavin adenine dinucleotide binding"/>
    <property type="evidence" value="ECO:0007669"/>
    <property type="project" value="UniProtKB-UniRule"/>
</dbReference>
<dbReference type="GO" id="GO:0050661">
    <property type="term" value="F:NADP binding"/>
    <property type="evidence" value="ECO:0007669"/>
    <property type="project" value="UniProtKB-UniRule"/>
</dbReference>
<dbReference type="Gene3D" id="3.50.50.60">
    <property type="entry name" value="FAD/NAD(P)-binding domain"/>
    <property type="match status" value="2"/>
</dbReference>
<dbReference type="HAMAP" id="MF_01685">
    <property type="entry name" value="FENR2"/>
    <property type="match status" value="1"/>
</dbReference>
<dbReference type="InterPro" id="IPR036188">
    <property type="entry name" value="FAD/NAD-bd_sf"/>
</dbReference>
<dbReference type="InterPro" id="IPR023753">
    <property type="entry name" value="FAD/NAD-binding_dom"/>
</dbReference>
<dbReference type="InterPro" id="IPR022890">
    <property type="entry name" value="Fd--NADP_Rdtase_type_2"/>
</dbReference>
<dbReference type="InterPro" id="IPR050097">
    <property type="entry name" value="Ferredoxin-NADP_redctase_2"/>
</dbReference>
<dbReference type="PANTHER" id="PTHR48105">
    <property type="entry name" value="THIOREDOXIN REDUCTASE 1-RELATED-RELATED"/>
    <property type="match status" value="1"/>
</dbReference>
<dbReference type="Pfam" id="PF07992">
    <property type="entry name" value="Pyr_redox_2"/>
    <property type="match status" value="1"/>
</dbReference>
<dbReference type="PRINTS" id="PR00368">
    <property type="entry name" value="FADPNR"/>
</dbReference>
<dbReference type="PRINTS" id="PR00469">
    <property type="entry name" value="PNDRDTASEII"/>
</dbReference>
<dbReference type="SUPFAM" id="SSF51905">
    <property type="entry name" value="FAD/NAD(P)-binding domain"/>
    <property type="match status" value="1"/>
</dbReference>